<comment type="function">
    <text evidence="2">Mitochondrial glycine transporter that imports glycine into the mitochondrial matrix. Plays an important role in providing glycine for the first enzymatic step in heme biosynthesis, the condensation of glycine with succinyl-CoA to produce 5-aminolevulinate (ALA) in the mitochondrial matrix.</text>
</comment>
<comment type="catalytic activity">
    <reaction evidence="1">
        <text>glycine(in) = glycine(out)</text>
        <dbReference type="Rhea" id="RHEA:70715"/>
        <dbReference type="ChEBI" id="CHEBI:57305"/>
    </reaction>
</comment>
<comment type="subcellular location">
    <subcellularLocation>
        <location evidence="2">Mitochondrion inner membrane</location>
        <topology evidence="2">Multi-pass membrane protein</topology>
    </subcellularLocation>
</comment>
<comment type="similarity">
    <text evidence="2">Belongs to the mitochondrial carrier (TC 2.A.29) family. SLC25A38 subfamily.</text>
</comment>
<sequence length="309" mass="33415">MSNVGQQLLSGGLSGLATTVCLQPFDLLKTRLQQGDGSTWRPTRPHTSIILDITRDVIHSGGWRGLWRGTTPSLVRNVPGVALYMTSLTQLRALMATSPYFASLRRRPQNGDANKNTSSVLPKLTSQGNLIAGATTRVGVGFLLNPFSVLKARFESNIYAYESLTGAFGTIVRQGPSELLRGFLASSLRDAPYAGLFVVFYEGIKHEASYVLPPVTSTQATLIHGLSAASAGAIATMATHPFDVIKTKIQVRTEAQYHGFLTTIATIWKQRGITGYFDGASLRMSRKVLSSAIGWAVYEGGLMLMRTST</sequence>
<keyword id="KW-0472">Membrane</keyword>
<keyword id="KW-0496">Mitochondrion</keyword>
<keyword id="KW-0999">Mitochondrion inner membrane</keyword>
<keyword id="KW-1185">Reference proteome</keyword>
<keyword id="KW-0677">Repeat</keyword>
<keyword id="KW-0812">Transmembrane</keyword>
<keyword id="KW-1133">Transmembrane helix</keyword>
<keyword id="KW-0813">Transport</keyword>
<dbReference type="EMBL" id="DS547115">
    <property type="protein sequence ID" value="EDR05011.1"/>
    <property type="molecule type" value="Genomic_DNA"/>
</dbReference>
<dbReference type="RefSeq" id="XP_001884401.1">
    <property type="nucleotide sequence ID" value="XM_001884366.1"/>
</dbReference>
<dbReference type="SMR" id="B0DK57"/>
<dbReference type="FunCoup" id="B0DK57">
    <property type="interactions" value="156"/>
</dbReference>
<dbReference type="STRING" id="486041.B0DK57"/>
<dbReference type="GeneID" id="6079999"/>
<dbReference type="KEGG" id="lbc:LACBIDRAFT_191230"/>
<dbReference type="HOGENOM" id="CLU_015166_0_3_1"/>
<dbReference type="InParanoid" id="B0DK57"/>
<dbReference type="OrthoDB" id="1924968at2759"/>
<dbReference type="Proteomes" id="UP000001194">
    <property type="component" value="Unassembled WGS sequence"/>
</dbReference>
<dbReference type="GO" id="GO:0005743">
    <property type="term" value="C:mitochondrial inner membrane"/>
    <property type="evidence" value="ECO:0007669"/>
    <property type="project" value="UniProtKB-SubCell"/>
</dbReference>
<dbReference type="GO" id="GO:0015187">
    <property type="term" value="F:glycine transmembrane transporter activity"/>
    <property type="evidence" value="ECO:0007669"/>
    <property type="project" value="UniProtKB-UniRule"/>
</dbReference>
<dbReference type="GO" id="GO:1904983">
    <property type="term" value="P:glycine import into mitochondrion"/>
    <property type="evidence" value="ECO:0007669"/>
    <property type="project" value="UniProtKB-UniRule"/>
</dbReference>
<dbReference type="Gene3D" id="1.50.40.10">
    <property type="entry name" value="Mitochondrial carrier domain"/>
    <property type="match status" value="1"/>
</dbReference>
<dbReference type="HAMAP" id="MF_03064">
    <property type="entry name" value="SLC25A38"/>
    <property type="match status" value="1"/>
</dbReference>
<dbReference type="InterPro" id="IPR030847">
    <property type="entry name" value="Hem25/SLC25A38"/>
</dbReference>
<dbReference type="InterPro" id="IPR002067">
    <property type="entry name" value="Mit_carrier"/>
</dbReference>
<dbReference type="InterPro" id="IPR018108">
    <property type="entry name" value="Mitochondrial_sb/sol_carrier"/>
</dbReference>
<dbReference type="InterPro" id="IPR023395">
    <property type="entry name" value="Mt_carrier_dom_sf"/>
</dbReference>
<dbReference type="PANTHER" id="PTHR46181">
    <property type="entry name" value="MITOCHONDRIAL GLYCINE TRANSPORTER"/>
    <property type="match status" value="1"/>
</dbReference>
<dbReference type="PANTHER" id="PTHR46181:SF3">
    <property type="entry name" value="MITOCHONDRIAL GLYCINE TRANSPORTER"/>
    <property type="match status" value="1"/>
</dbReference>
<dbReference type="Pfam" id="PF00153">
    <property type="entry name" value="Mito_carr"/>
    <property type="match status" value="3"/>
</dbReference>
<dbReference type="PRINTS" id="PR00926">
    <property type="entry name" value="MITOCARRIER"/>
</dbReference>
<dbReference type="SUPFAM" id="SSF103506">
    <property type="entry name" value="Mitochondrial carrier"/>
    <property type="match status" value="1"/>
</dbReference>
<dbReference type="PROSITE" id="PS50920">
    <property type="entry name" value="SOLCAR"/>
    <property type="match status" value="3"/>
</dbReference>
<accession>B0DK57</accession>
<name>S2538_LACBS</name>
<organism>
    <name type="scientific">Laccaria bicolor (strain S238N-H82 / ATCC MYA-4686)</name>
    <name type="common">Bicoloured deceiver</name>
    <name type="synonym">Laccaria laccata var. bicolor</name>
    <dbReference type="NCBI Taxonomy" id="486041"/>
    <lineage>
        <taxon>Eukaryota</taxon>
        <taxon>Fungi</taxon>
        <taxon>Dikarya</taxon>
        <taxon>Basidiomycota</taxon>
        <taxon>Agaricomycotina</taxon>
        <taxon>Agaricomycetes</taxon>
        <taxon>Agaricomycetidae</taxon>
        <taxon>Agaricales</taxon>
        <taxon>Agaricineae</taxon>
        <taxon>Hydnangiaceae</taxon>
        <taxon>Laccaria</taxon>
    </lineage>
</organism>
<proteinExistence type="inferred from homology"/>
<feature type="chain" id="PRO_0000378937" description="Mitochondrial glycine transporter">
    <location>
        <begin position="1"/>
        <end position="309"/>
    </location>
</feature>
<feature type="transmembrane region" description="Helical; Name=1" evidence="2">
    <location>
        <begin position="8"/>
        <end position="33"/>
    </location>
</feature>
<feature type="transmembrane region" description="Helical; Name=2" evidence="2">
    <location>
        <begin position="69"/>
        <end position="95"/>
    </location>
</feature>
<feature type="transmembrane region" description="Helical; Name=3" evidence="2">
    <location>
        <begin position="130"/>
        <end position="155"/>
    </location>
</feature>
<feature type="transmembrane region" description="Helical; Name=4" evidence="2">
    <location>
        <begin position="182"/>
        <end position="205"/>
    </location>
</feature>
<feature type="transmembrane region" description="Helical; Name=5" evidence="2">
    <location>
        <begin position="223"/>
        <end position="249"/>
    </location>
</feature>
<feature type="transmembrane region" description="Helical; Name=6" evidence="2">
    <location>
        <begin position="279"/>
        <end position="297"/>
    </location>
</feature>
<feature type="repeat" description="Solcar 1" evidence="2">
    <location>
        <begin position="2"/>
        <end position="94"/>
    </location>
</feature>
<feature type="repeat" description="Solcar 2" evidence="2">
    <location>
        <begin position="124"/>
        <end position="207"/>
    </location>
</feature>
<feature type="repeat" description="Solcar 3" evidence="2">
    <location>
        <begin position="219"/>
        <end position="304"/>
    </location>
</feature>
<reference key="1">
    <citation type="journal article" date="2008" name="Nature">
        <title>The genome of Laccaria bicolor provides insights into mycorrhizal symbiosis.</title>
        <authorList>
            <person name="Martin F."/>
            <person name="Aerts A."/>
            <person name="Ahren D."/>
            <person name="Brun A."/>
            <person name="Danchin E.G.J."/>
            <person name="Duchaussoy F."/>
            <person name="Gibon J."/>
            <person name="Kohler A."/>
            <person name="Lindquist E."/>
            <person name="Pereda V."/>
            <person name="Salamov A."/>
            <person name="Shapiro H.J."/>
            <person name="Wuyts J."/>
            <person name="Blaudez D."/>
            <person name="Buee M."/>
            <person name="Brokstein P."/>
            <person name="Canbaeck B."/>
            <person name="Cohen D."/>
            <person name="Courty P.E."/>
            <person name="Coutinho P.M."/>
            <person name="Delaruelle C."/>
            <person name="Detter J.C."/>
            <person name="Deveau A."/>
            <person name="DiFazio S."/>
            <person name="Duplessis S."/>
            <person name="Fraissinet-Tachet L."/>
            <person name="Lucic E."/>
            <person name="Frey-Klett P."/>
            <person name="Fourrey C."/>
            <person name="Feussner I."/>
            <person name="Gay G."/>
            <person name="Grimwood J."/>
            <person name="Hoegger P.J."/>
            <person name="Jain P."/>
            <person name="Kilaru S."/>
            <person name="Labbe J."/>
            <person name="Lin Y.C."/>
            <person name="Legue V."/>
            <person name="Le Tacon F."/>
            <person name="Marmeisse R."/>
            <person name="Melayah D."/>
            <person name="Montanini B."/>
            <person name="Muratet M."/>
            <person name="Nehls U."/>
            <person name="Niculita-Hirzel H."/>
            <person name="Oudot-Le Secq M.P."/>
            <person name="Peter M."/>
            <person name="Quesneville H."/>
            <person name="Rajashekar B."/>
            <person name="Reich M."/>
            <person name="Rouhier N."/>
            <person name="Schmutz J."/>
            <person name="Yin T."/>
            <person name="Chalot M."/>
            <person name="Henrissat B."/>
            <person name="Kuees U."/>
            <person name="Lucas S."/>
            <person name="Van de Peer Y."/>
            <person name="Podila G.K."/>
            <person name="Polle A."/>
            <person name="Pukkila P.J."/>
            <person name="Richardson P.M."/>
            <person name="Rouze P."/>
            <person name="Sanders I.R."/>
            <person name="Stajich J.E."/>
            <person name="Tunlid A."/>
            <person name="Tuskan G."/>
            <person name="Grigoriev I.V."/>
        </authorList>
    </citation>
    <scope>NUCLEOTIDE SEQUENCE [LARGE SCALE GENOMIC DNA]</scope>
    <source>
        <strain>S238N-H82 / ATCC MYA-4686</strain>
    </source>
</reference>
<evidence type="ECO:0000250" key="1">
    <source>
        <dbReference type="UniProtKB" id="Q96DW6"/>
    </source>
</evidence>
<evidence type="ECO:0000255" key="2">
    <source>
        <dbReference type="HAMAP-Rule" id="MF_03064"/>
    </source>
</evidence>
<protein>
    <recommendedName>
        <fullName evidence="2">Mitochondrial glycine transporter</fullName>
    </recommendedName>
    <alternativeName>
        <fullName evidence="2">Solute carrier family 25 member 38 homolog</fullName>
    </alternativeName>
</protein>
<gene>
    <name type="ORF">LACBIDRAFT_191230</name>
</gene>